<reference key="1">
    <citation type="journal article" date="2005" name="Proc. Natl. Acad. Sci. U.S.A.">
        <title>Complete genome sequencing of Anaplasma marginale reveals that the surface is skewed to two superfamilies of outer membrane proteins.</title>
        <authorList>
            <person name="Brayton K.A."/>
            <person name="Kappmeyer L.S."/>
            <person name="Herndon D.R."/>
            <person name="Dark M.J."/>
            <person name="Tibbals D.L."/>
            <person name="Palmer G.H."/>
            <person name="McGuire T.C."/>
            <person name="Knowles D.P. Jr."/>
        </authorList>
    </citation>
    <scope>NUCLEOTIDE SEQUENCE [LARGE SCALE GENOMIC DNA]</scope>
    <source>
        <strain>St. Maries</strain>
    </source>
</reference>
<accession>Q5PBV2</accession>
<keyword id="KW-0030">Aminoacyl-tRNA synthetase</keyword>
<keyword id="KW-0067">ATP-binding</keyword>
<keyword id="KW-0963">Cytoplasm</keyword>
<keyword id="KW-0436">Ligase</keyword>
<keyword id="KW-0460">Magnesium</keyword>
<keyword id="KW-0479">Metal-binding</keyword>
<keyword id="KW-0547">Nucleotide-binding</keyword>
<keyword id="KW-0648">Protein biosynthesis</keyword>
<sequence length="351" mass="39649">MGMLVPLISKISDLSEEAKACVAACSSVEELDEVRGRYIGRAGALTALLRQISTIQDMDERKAVGSAANAACAALKLAIQDRESQLAREQLHSRLASERIDVTLPARPRTCGKIHPISGVIREISSILSELGFAVVHGPELEDEFHVFDALNTPEHHPARAENDTFYMTKRLNGRRVVLRTHTSSMQIRAMESNPNPPIKIISPGRVYRNDWDATHSPVFHQVEGLFVDKHVTMGHLKYCINYFLSRFFARKVETRMRASFFPFTEPSAEIDVKDRHQKWVEVLGCGMVHPAVLENVNIDPEKYRGFAFGMGVERMAMLKYGITDLRNFYSNKLEWLNHYGFCFTDILGRA</sequence>
<name>SYFA_ANAMM</name>
<dbReference type="EC" id="6.1.1.20" evidence="1"/>
<dbReference type="EMBL" id="CP000030">
    <property type="protein sequence ID" value="AAV86227.1"/>
    <property type="molecule type" value="Genomic_DNA"/>
</dbReference>
<dbReference type="SMR" id="Q5PBV2"/>
<dbReference type="KEGG" id="ama:AM055"/>
<dbReference type="HOGENOM" id="CLU_025086_0_1_5"/>
<dbReference type="GO" id="GO:0005737">
    <property type="term" value="C:cytoplasm"/>
    <property type="evidence" value="ECO:0007669"/>
    <property type="project" value="UniProtKB-SubCell"/>
</dbReference>
<dbReference type="GO" id="GO:0005524">
    <property type="term" value="F:ATP binding"/>
    <property type="evidence" value="ECO:0007669"/>
    <property type="project" value="UniProtKB-UniRule"/>
</dbReference>
<dbReference type="GO" id="GO:0000287">
    <property type="term" value="F:magnesium ion binding"/>
    <property type="evidence" value="ECO:0007669"/>
    <property type="project" value="UniProtKB-UniRule"/>
</dbReference>
<dbReference type="GO" id="GO:0004826">
    <property type="term" value="F:phenylalanine-tRNA ligase activity"/>
    <property type="evidence" value="ECO:0007669"/>
    <property type="project" value="UniProtKB-UniRule"/>
</dbReference>
<dbReference type="GO" id="GO:0000049">
    <property type="term" value="F:tRNA binding"/>
    <property type="evidence" value="ECO:0007669"/>
    <property type="project" value="InterPro"/>
</dbReference>
<dbReference type="GO" id="GO:0006432">
    <property type="term" value="P:phenylalanyl-tRNA aminoacylation"/>
    <property type="evidence" value="ECO:0007669"/>
    <property type="project" value="UniProtKB-UniRule"/>
</dbReference>
<dbReference type="CDD" id="cd00496">
    <property type="entry name" value="PheRS_alpha_core"/>
    <property type="match status" value="1"/>
</dbReference>
<dbReference type="Gene3D" id="3.30.930.10">
    <property type="entry name" value="Bira Bifunctional Protein, Domain 2"/>
    <property type="match status" value="1"/>
</dbReference>
<dbReference type="HAMAP" id="MF_00281">
    <property type="entry name" value="Phe_tRNA_synth_alpha1"/>
    <property type="match status" value="1"/>
</dbReference>
<dbReference type="InterPro" id="IPR006195">
    <property type="entry name" value="aa-tRNA-synth_II"/>
</dbReference>
<dbReference type="InterPro" id="IPR045864">
    <property type="entry name" value="aa-tRNA-synth_II/BPL/LPL"/>
</dbReference>
<dbReference type="InterPro" id="IPR004529">
    <property type="entry name" value="Phe-tRNA-synth_IIc_asu"/>
</dbReference>
<dbReference type="InterPro" id="IPR004188">
    <property type="entry name" value="Phe-tRNA_ligase_II_N"/>
</dbReference>
<dbReference type="InterPro" id="IPR022911">
    <property type="entry name" value="Phe_tRNA_ligase_alpha1_bac"/>
</dbReference>
<dbReference type="InterPro" id="IPR002319">
    <property type="entry name" value="Phenylalanyl-tRNA_Synthase"/>
</dbReference>
<dbReference type="InterPro" id="IPR010978">
    <property type="entry name" value="tRNA-bd_arm"/>
</dbReference>
<dbReference type="NCBIfam" id="TIGR00468">
    <property type="entry name" value="pheS"/>
    <property type="match status" value="1"/>
</dbReference>
<dbReference type="PANTHER" id="PTHR11538:SF41">
    <property type="entry name" value="PHENYLALANINE--TRNA LIGASE, MITOCHONDRIAL"/>
    <property type="match status" value="1"/>
</dbReference>
<dbReference type="PANTHER" id="PTHR11538">
    <property type="entry name" value="PHENYLALANYL-TRNA SYNTHETASE"/>
    <property type="match status" value="1"/>
</dbReference>
<dbReference type="Pfam" id="PF02912">
    <property type="entry name" value="Phe_tRNA-synt_N"/>
    <property type="match status" value="1"/>
</dbReference>
<dbReference type="Pfam" id="PF01409">
    <property type="entry name" value="tRNA-synt_2d"/>
    <property type="match status" value="1"/>
</dbReference>
<dbReference type="SUPFAM" id="SSF55681">
    <property type="entry name" value="Class II aaRS and biotin synthetases"/>
    <property type="match status" value="1"/>
</dbReference>
<dbReference type="SUPFAM" id="SSF46589">
    <property type="entry name" value="tRNA-binding arm"/>
    <property type="match status" value="1"/>
</dbReference>
<dbReference type="PROSITE" id="PS50862">
    <property type="entry name" value="AA_TRNA_LIGASE_II"/>
    <property type="match status" value="1"/>
</dbReference>
<proteinExistence type="inferred from homology"/>
<comment type="catalytic activity">
    <reaction evidence="1">
        <text>tRNA(Phe) + L-phenylalanine + ATP = L-phenylalanyl-tRNA(Phe) + AMP + diphosphate + H(+)</text>
        <dbReference type="Rhea" id="RHEA:19413"/>
        <dbReference type="Rhea" id="RHEA-COMP:9668"/>
        <dbReference type="Rhea" id="RHEA-COMP:9699"/>
        <dbReference type="ChEBI" id="CHEBI:15378"/>
        <dbReference type="ChEBI" id="CHEBI:30616"/>
        <dbReference type="ChEBI" id="CHEBI:33019"/>
        <dbReference type="ChEBI" id="CHEBI:58095"/>
        <dbReference type="ChEBI" id="CHEBI:78442"/>
        <dbReference type="ChEBI" id="CHEBI:78531"/>
        <dbReference type="ChEBI" id="CHEBI:456215"/>
        <dbReference type="EC" id="6.1.1.20"/>
    </reaction>
</comment>
<comment type="cofactor">
    <cofactor evidence="1">
        <name>Mg(2+)</name>
        <dbReference type="ChEBI" id="CHEBI:18420"/>
    </cofactor>
    <text evidence="1">Binds 2 magnesium ions per tetramer.</text>
</comment>
<comment type="subunit">
    <text evidence="1">Tetramer of two alpha and two beta subunits.</text>
</comment>
<comment type="subcellular location">
    <subcellularLocation>
        <location evidence="1">Cytoplasm</location>
    </subcellularLocation>
</comment>
<comment type="similarity">
    <text evidence="1">Belongs to the class-II aminoacyl-tRNA synthetase family. Phe-tRNA synthetase alpha subunit type 1 subfamily.</text>
</comment>
<gene>
    <name evidence="1" type="primary">pheS</name>
    <name type="ordered locus">AM055</name>
</gene>
<feature type="chain" id="PRO_0000231960" description="Phenylalanine--tRNA ligase alpha subunit">
    <location>
        <begin position="1"/>
        <end position="351"/>
    </location>
</feature>
<feature type="binding site" evidence="1">
    <location>
        <position position="266"/>
    </location>
    <ligand>
        <name>Mg(2+)</name>
        <dbReference type="ChEBI" id="CHEBI:18420"/>
        <note>shared with beta subunit</note>
    </ligand>
</feature>
<evidence type="ECO:0000255" key="1">
    <source>
        <dbReference type="HAMAP-Rule" id="MF_00281"/>
    </source>
</evidence>
<protein>
    <recommendedName>
        <fullName evidence="1">Phenylalanine--tRNA ligase alpha subunit</fullName>
        <ecNumber evidence="1">6.1.1.20</ecNumber>
    </recommendedName>
    <alternativeName>
        <fullName evidence="1">Phenylalanyl-tRNA synthetase alpha subunit</fullName>
        <shortName evidence="1">PheRS</shortName>
    </alternativeName>
</protein>
<organism>
    <name type="scientific">Anaplasma marginale (strain St. Maries)</name>
    <dbReference type="NCBI Taxonomy" id="234826"/>
    <lineage>
        <taxon>Bacteria</taxon>
        <taxon>Pseudomonadati</taxon>
        <taxon>Pseudomonadota</taxon>
        <taxon>Alphaproteobacteria</taxon>
        <taxon>Rickettsiales</taxon>
        <taxon>Anaplasmataceae</taxon>
        <taxon>Anaplasma</taxon>
    </lineage>
</organism>